<keyword id="KW-0101">Branched-chain amino acid catabolism</keyword>
<keyword id="KW-0963">Cytoplasm</keyword>
<keyword id="KW-0903">Direct protein sequencing</keyword>
<keyword id="KW-0520">NAD</keyword>
<keyword id="KW-0560">Oxidoreductase</keyword>
<keyword id="KW-1185">Reference proteome</keyword>
<organism>
    <name type="scientific">Streptomyces coelicolor (strain ATCC BAA-471 / A3(2) / M145)</name>
    <dbReference type="NCBI Taxonomy" id="100226"/>
    <lineage>
        <taxon>Bacteria</taxon>
        <taxon>Bacillati</taxon>
        <taxon>Actinomycetota</taxon>
        <taxon>Actinomycetes</taxon>
        <taxon>Kitasatosporales</taxon>
        <taxon>Streptomycetaceae</taxon>
        <taxon>Streptomyces</taxon>
        <taxon>Streptomyces albidoflavus group</taxon>
    </lineage>
</organism>
<protein>
    <recommendedName>
        <fullName>Valine dehydrogenase</fullName>
        <shortName>ValDH</shortName>
        <ecNumber evidence="3">1.4.1.23</ecNumber>
    </recommendedName>
</protein>
<comment type="function">
    <text evidence="3">Oxidative deamination of branched-chain amino acids. Oxidizes L-valine and L-alpha-aminobutyric acid efficiently, and L-isoleucine and L-leucine less efficiently. Does not act on D-valine. The catabolism of L-valine is the major source of fatty acid precursors for macrolide biosynthesis and a vital source of antibiotic precursors. Uses NAD; no activity was found with NADP.</text>
</comment>
<comment type="catalytic activity">
    <reaction evidence="3">
        <text>L-valine + NAD(+) + H2O = 3-methyl-2-oxobutanoate + NH4(+) + NADH + H(+)</text>
        <dbReference type="Rhea" id="RHEA:30763"/>
        <dbReference type="ChEBI" id="CHEBI:11851"/>
        <dbReference type="ChEBI" id="CHEBI:15377"/>
        <dbReference type="ChEBI" id="CHEBI:15378"/>
        <dbReference type="ChEBI" id="CHEBI:28938"/>
        <dbReference type="ChEBI" id="CHEBI:57540"/>
        <dbReference type="ChEBI" id="CHEBI:57762"/>
        <dbReference type="ChEBI" id="CHEBI:57945"/>
        <dbReference type="EC" id="1.4.1.23"/>
    </reaction>
</comment>
<comment type="activity regulation">
    <text>Repressed in minimal medium by the presence of glucose and NH4(+), glycerol and NH4(+), or glycerol and asparagine.</text>
</comment>
<comment type="biophysicochemical properties">
    <phDependence>
        <text evidence="3">Optimum pH is 10.5 with valine as substrate.</text>
    </phDependence>
</comment>
<comment type="pathway">
    <text>Amino-acid degradation; L-valine degradation.</text>
</comment>
<comment type="subunit">
    <text evidence="3">Homodimer.</text>
</comment>
<comment type="subcellular location">
    <subcellularLocation>
        <location>Cytoplasm</location>
    </subcellularLocation>
</comment>
<comment type="induction">
    <text>By valine.</text>
</comment>
<comment type="similarity">
    <text evidence="5">Belongs to the Glu/Leu/Phe/Val dehydrogenases family.</text>
</comment>
<reference key="1">
    <citation type="journal article" date="1993" name="J. Bacteriol.">
        <title>Sequence, transcriptional, and functional analyses of the valine (branched-chain amino acid) dehydrogenase gene of Streptomyces coelicolor.</title>
        <authorList>
            <person name="Tang L."/>
            <person name="Hutchinson C.R."/>
        </authorList>
    </citation>
    <scope>NUCLEOTIDE SEQUENCE [GENOMIC DNA]</scope>
    <scope>PROTEIN SEQUENCE OF 2-21</scope>
    <source>
        <strain>A3(2) / J802</strain>
    </source>
</reference>
<reference key="2">
    <citation type="journal article" date="2002" name="Nature">
        <title>Complete genome sequence of the model actinomycete Streptomyces coelicolor A3(2).</title>
        <authorList>
            <person name="Bentley S.D."/>
            <person name="Chater K.F."/>
            <person name="Cerdeno-Tarraga A.-M."/>
            <person name="Challis G.L."/>
            <person name="Thomson N.R."/>
            <person name="James K.D."/>
            <person name="Harris D.E."/>
            <person name="Quail M.A."/>
            <person name="Kieser H."/>
            <person name="Harper D."/>
            <person name="Bateman A."/>
            <person name="Brown S."/>
            <person name="Chandra G."/>
            <person name="Chen C.W."/>
            <person name="Collins M."/>
            <person name="Cronin A."/>
            <person name="Fraser A."/>
            <person name="Goble A."/>
            <person name="Hidalgo J."/>
            <person name="Hornsby T."/>
            <person name="Howarth S."/>
            <person name="Huang C.-H."/>
            <person name="Kieser T."/>
            <person name="Larke L."/>
            <person name="Murphy L.D."/>
            <person name="Oliver K."/>
            <person name="O'Neil S."/>
            <person name="Rabbinowitsch E."/>
            <person name="Rajandream M.A."/>
            <person name="Rutherford K.M."/>
            <person name="Rutter S."/>
            <person name="Seeger K."/>
            <person name="Saunders D."/>
            <person name="Sharp S."/>
            <person name="Squares R."/>
            <person name="Squares S."/>
            <person name="Taylor K."/>
            <person name="Warren T."/>
            <person name="Wietzorrek A."/>
            <person name="Woodward J.R."/>
            <person name="Barrell B.G."/>
            <person name="Parkhill J."/>
            <person name="Hopwood D.A."/>
        </authorList>
    </citation>
    <scope>NUCLEOTIDE SEQUENCE [LARGE SCALE GENOMIC DNA]</scope>
    <source>
        <strain>ATCC BAA-471 / A3(2) / M145</strain>
    </source>
</reference>
<reference key="3">
    <citation type="journal article" date="1990" name="J. Gen. Microbiol.">
        <title>Purification of an inducible L-valine dehydrogenase of Streptomyces coelicolor A3(2).</title>
        <authorList>
            <person name="Navarette R.M."/>
            <person name="Vara J.A."/>
            <person name="Hutchinson C.R."/>
        </authorList>
    </citation>
    <scope>CATALYTIC ACTIVITY</scope>
    <scope>FUNCTION</scope>
    <scope>SUBUNIT</scope>
    <scope>BIOPHYSICOCHEMICAL PROPERTIES</scope>
    <source>
        <strain>A3(2) / NRRL B-16638</strain>
    </source>
</reference>
<name>VDH_STRCO</name>
<dbReference type="EC" id="1.4.1.23" evidence="3"/>
<dbReference type="EMBL" id="L13455">
    <property type="protein sequence ID" value="AAA71983.1"/>
    <property type="molecule type" value="Genomic_DNA"/>
</dbReference>
<dbReference type="EMBL" id="AL939118">
    <property type="protein sequence ID" value="CAB56369.1"/>
    <property type="molecule type" value="Genomic_DNA"/>
</dbReference>
<dbReference type="PIR" id="B40657">
    <property type="entry name" value="B40657"/>
</dbReference>
<dbReference type="RefSeq" id="NP_628270.1">
    <property type="nucleotide sequence ID" value="NC_003888.3"/>
</dbReference>
<dbReference type="RefSeq" id="WP_011029424.1">
    <property type="nucleotide sequence ID" value="NZ_VNID01000030.1"/>
</dbReference>
<dbReference type="SMR" id="Q06539"/>
<dbReference type="STRING" id="100226.gene:17761724"/>
<dbReference type="PaxDb" id="100226-SCO4089"/>
<dbReference type="KEGG" id="sco:SCO4089"/>
<dbReference type="PATRIC" id="fig|100226.15.peg.4148"/>
<dbReference type="eggNOG" id="COG0334">
    <property type="taxonomic scope" value="Bacteria"/>
</dbReference>
<dbReference type="HOGENOM" id="CLU_025763_0_0_11"/>
<dbReference type="InParanoid" id="Q06539"/>
<dbReference type="OrthoDB" id="9803297at2"/>
<dbReference type="PhylomeDB" id="Q06539"/>
<dbReference type="BioCyc" id="MetaCyc:MONOMER-17657"/>
<dbReference type="UniPathway" id="UPA00362"/>
<dbReference type="Proteomes" id="UP000001973">
    <property type="component" value="Chromosome"/>
</dbReference>
<dbReference type="GO" id="GO:0005737">
    <property type="term" value="C:cytoplasm"/>
    <property type="evidence" value="ECO:0007669"/>
    <property type="project" value="UniProtKB-SubCell"/>
</dbReference>
<dbReference type="GO" id="GO:0043837">
    <property type="term" value="F:valine dehydrogenase (NAD+) activity"/>
    <property type="evidence" value="ECO:0007669"/>
    <property type="project" value="UniProtKB-EC"/>
</dbReference>
<dbReference type="GO" id="GO:0006574">
    <property type="term" value="P:valine catabolic process"/>
    <property type="evidence" value="ECO:0007669"/>
    <property type="project" value="UniProtKB-UniPathway"/>
</dbReference>
<dbReference type="CDD" id="cd01075">
    <property type="entry name" value="NAD_bind_Leu_Phe_Val_DH"/>
    <property type="match status" value="1"/>
</dbReference>
<dbReference type="FunFam" id="3.40.50.10860:FF:000010">
    <property type="entry name" value="Leucine dehydrogenase"/>
    <property type="match status" value="1"/>
</dbReference>
<dbReference type="Gene3D" id="3.40.50.10860">
    <property type="entry name" value="Leucine Dehydrogenase, chain A, domain 1"/>
    <property type="match status" value="1"/>
</dbReference>
<dbReference type="Gene3D" id="3.40.50.720">
    <property type="entry name" value="NAD(P)-binding Rossmann-like Domain"/>
    <property type="match status" value="1"/>
</dbReference>
<dbReference type="InterPro" id="IPR046346">
    <property type="entry name" value="Aminoacid_DH-like_N_sf"/>
</dbReference>
<dbReference type="InterPro" id="IPR006095">
    <property type="entry name" value="Glu/Leu/Phe/Val/Trp_DH"/>
</dbReference>
<dbReference type="InterPro" id="IPR006096">
    <property type="entry name" value="Glu/Leu/Phe/Val/Trp_DH_C"/>
</dbReference>
<dbReference type="InterPro" id="IPR006097">
    <property type="entry name" value="Glu/Leu/Phe/Val/Trp_DH_dimer"/>
</dbReference>
<dbReference type="InterPro" id="IPR033524">
    <property type="entry name" value="Glu/Leu/Phe/Val_DH_AS"/>
</dbReference>
<dbReference type="InterPro" id="IPR016211">
    <property type="entry name" value="Glu/Phe/Leu/Val/Trp_DH_bac/arc"/>
</dbReference>
<dbReference type="InterPro" id="IPR036291">
    <property type="entry name" value="NAD(P)-bd_dom_sf"/>
</dbReference>
<dbReference type="PANTHER" id="PTHR42722">
    <property type="entry name" value="LEUCINE DEHYDROGENASE"/>
    <property type="match status" value="1"/>
</dbReference>
<dbReference type="PANTHER" id="PTHR42722:SF1">
    <property type="entry name" value="VALINE DEHYDROGENASE"/>
    <property type="match status" value="1"/>
</dbReference>
<dbReference type="Pfam" id="PF00208">
    <property type="entry name" value="ELFV_dehydrog"/>
    <property type="match status" value="1"/>
</dbReference>
<dbReference type="Pfam" id="PF02812">
    <property type="entry name" value="ELFV_dehydrog_N"/>
    <property type="match status" value="1"/>
</dbReference>
<dbReference type="PIRSF" id="PIRSF000188">
    <property type="entry name" value="Phe_leu_dh"/>
    <property type="match status" value="1"/>
</dbReference>
<dbReference type="PRINTS" id="PR00082">
    <property type="entry name" value="GLFDHDRGNASE"/>
</dbReference>
<dbReference type="SMART" id="SM00839">
    <property type="entry name" value="ELFV_dehydrog"/>
    <property type="match status" value="1"/>
</dbReference>
<dbReference type="SUPFAM" id="SSF53223">
    <property type="entry name" value="Aminoacid dehydrogenase-like, N-terminal domain"/>
    <property type="match status" value="1"/>
</dbReference>
<dbReference type="SUPFAM" id="SSF51735">
    <property type="entry name" value="NAD(P)-binding Rossmann-fold domains"/>
    <property type="match status" value="1"/>
</dbReference>
<dbReference type="PROSITE" id="PS00074">
    <property type="entry name" value="GLFV_DEHYDROGENASE"/>
    <property type="match status" value="1"/>
</dbReference>
<proteinExistence type="evidence at protein level"/>
<gene>
    <name type="primary">vdh</name>
    <name type="ordered locus">SCO4089</name>
    <name type="ORF">SCD25.25c</name>
</gene>
<evidence type="ECO:0000255" key="1"/>
<evidence type="ECO:0000255" key="2">
    <source>
        <dbReference type="PROSITE-ProRule" id="PRU10011"/>
    </source>
</evidence>
<evidence type="ECO:0000269" key="3">
    <source>
    </source>
</evidence>
<evidence type="ECO:0000269" key="4">
    <source>
    </source>
</evidence>
<evidence type="ECO:0000305" key="5"/>
<sequence>MTDVNGAPADVLHTLFHSDQGGHEQVVLCQDRASGLKAVIALHSTALGPALGGTRFYPYASEAEAVADALNLARGMSYKNAMAGLDHGGGKAVIIGDPEQIKSEELLLAYGRFVASLGGRYVTACDVGTYVADMDVVARECRWTTGRSPENGGAGDSSVLTSFGVYQGMRAAAQHLWGDPTLRDRTVGIAGVGKVGHHLVEHLLAEGAHVVVTDVRKDVVRGITERHPSVVAVADTDALIRVENLDIYAPCALGGALNDDTVPVLTAKVVCGAANNQLAHPGVEKDLADRGILYAPDYVVNAGGVIQVADELHGFDFDRCKAKASKIYDTTLAIFARAKEDGIPPAAAADRIAEQRMAEARPRP</sequence>
<feature type="initiator methionine" description="Removed" evidence="4">
    <location>
        <position position="1"/>
    </location>
</feature>
<feature type="chain" id="PRO_0000182813" description="Valine dehydrogenase">
    <location>
        <begin position="2"/>
        <end position="364"/>
    </location>
</feature>
<feature type="active site" evidence="2">
    <location>
        <position position="91"/>
    </location>
</feature>
<feature type="binding site" evidence="1">
    <location>
        <begin position="191"/>
        <end position="197"/>
    </location>
    <ligand>
        <name>NAD(+)</name>
        <dbReference type="ChEBI" id="CHEBI:57540"/>
    </ligand>
</feature>
<feature type="sequence conflict" description="In Ref. 1; AA sequence." evidence="5" ref="1">
    <original>Q</original>
    <variation>A</variation>
    <location>
        <position position="20"/>
    </location>
</feature>
<feature type="sequence conflict" description="In Ref. 1; AAA71983." evidence="5" ref="1">
    <original>A</original>
    <variation>V</variation>
    <location>
        <position position="322"/>
    </location>
</feature>
<accession>Q06539</accession>
<accession>Q9RKJ7</accession>